<gene>
    <name evidence="1" type="primary">tnaA</name>
    <name type="ordered locus">ASA_2330</name>
</gene>
<name>TNAA_AERS4</name>
<organism>
    <name type="scientific">Aeromonas salmonicida (strain A449)</name>
    <dbReference type="NCBI Taxonomy" id="382245"/>
    <lineage>
        <taxon>Bacteria</taxon>
        <taxon>Pseudomonadati</taxon>
        <taxon>Pseudomonadota</taxon>
        <taxon>Gammaproteobacteria</taxon>
        <taxon>Aeromonadales</taxon>
        <taxon>Aeromonadaceae</taxon>
        <taxon>Aeromonas</taxon>
    </lineage>
</organism>
<sequence length="461" mass="50837">MRRIPEPFRIKMVEPIKQTTGAERRAALEAAGWNPFLLLAEDVYIDLLTDSGTGAMSDRQWAGIMMGDEAYAGSRNFVELERTVRELFGYQHVMPTHQGRGAEQILFPELVKRCKGKAPVFISNYHFDTTKAHVELAGERAINLLTPKALDTTAPYAWKGDFDLGRLTDTIETLGADNVAAVIITVTCNSAGGQPVSMGNMQAVSELARRHHIPVVIDAARFAENAWFIKARDPDYAKSSIKEIVRQMFDLGDMFTMSAKKDGLVNIGGLCCFKEGLDLFRSVQVRCVAMEGFVTYGGLAGRDMAALAIGLREGMDEEYLTYRIGQVAYLGERLAEAGIPIQTPTGGHAVFVDAKKLLPHIPGEQFPAHALACALYLEGGVRGVEIGSLLLGRDPATGKQEAADFELLRLTIPRRVYTRDHMDYVADCLIAVKTRASEIRGLTFDYEPPLLRHFTARLKPV</sequence>
<accession>A4SNA7</accession>
<evidence type="ECO:0000255" key="1">
    <source>
        <dbReference type="HAMAP-Rule" id="MF_00544"/>
    </source>
</evidence>
<dbReference type="EC" id="4.1.99.1" evidence="1"/>
<dbReference type="EMBL" id="CP000644">
    <property type="protein sequence ID" value="ABO90379.1"/>
    <property type="molecule type" value="Genomic_DNA"/>
</dbReference>
<dbReference type="RefSeq" id="WP_011898792.1">
    <property type="nucleotide sequence ID" value="NC_009348.1"/>
</dbReference>
<dbReference type="SMR" id="A4SNA7"/>
<dbReference type="STRING" id="29491.GCA_000820065_01598"/>
<dbReference type="KEGG" id="asa:ASA_2330"/>
<dbReference type="PATRIC" id="fig|382245.13.peg.2284"/>
<dbReference type="eggNOG" id="COG3033">
    <property type="taxonomic scope" value="Bacteria"/>
</dbReference>
<dbReference type="HOGENOM" id="CLU_047223_0_0_6"/>
<dbReference type="UniPathway" id="UPA00332">
    <property type="reaction ID" value="UER00452"/>
</dbReference>
<dbReference type="Proteomes" id="UP000000225">
    <property type="component" value="Chromosome"/>
</dbReference>
<dbReference type="GO" id="GO:0009034">
    <property type="term" value="F:tryptophanase activity"/>
    <property type="evidence" value="ECO:0007669"/>
    <property type="project" value="UniProtKB-UniRule"/>
</dbReference>
<dbReference type="Gene3D" id="3.90.1150.10">
    <property type="entry name" value="Aspartate Aminotransferase, domain 1"/>
    <property type="match status" value="1"/>
</dbReference>
<dbReference type="Gene3D" id="3.40.640.10">
    <property type="entry name" value="Type I PLP-dependent aspartate aminotransferase-like (Major domain)"/>
    <property type="match status" value="1"/>
</dbReference>
<dbReference type="HAMAP" id="MF_00544">
    <property type="entry name" value="Tryptophanase"/>
    <property type="match status" value="1"/>
</dbReference>
<dbReference type="InterPro" id="IPR001597">
    <property type="entry name" value="ArAA_b-elim_lyase/Thr_aldolase"/>
</dbReference>
<dbReference type="InterPro" id="IPR011166">
    <property type="entry name" value="Beta-eliminating_lyase"/>
</dbReference>
<dbReference type="InterPro" id="IPR015424">
    <property type="entry name" value="PyrdxlP-dep_Trfase"/>
</dbReference>
<dbReference type="InterPro" id="IPR015421">
    <property type="entry name" value="PyrdxlP-dep_Trfase_major"/>
</dbReference>
<dbReference type="InterPro" id="IPR015422">
    <property type="entry name" value="PyrdxlP-dep_Trfase_small"/>
</dbReference>
<dbReference type="InterPro" id="IPR013440">
    <property type="entry name" value="TNase"/>
</dbReference>
<dbReference type="NCBIfam" id="NF009709">
    <property type="entry name" value="PRK13238.1"/>
    <property type="match status" value="1"/>
</dbReference>
<dbReference type="PANTHER" id="PTHR32325">
    <property type="entry name" value="BETA-ELIMINATING LYASE-LIKE PROTEIN-RELATED"/>
    <property type="match status" value="1"/>
</dbReference>
<dbReference type="PANTHER" id="PTHR32325:SF4">
    <property type="entry name" value="TRYPTOPHANASE"/>
    <property type="match status" value="1"/>
</dbReference>
<dbReference type="Pfam" id="PF01212">
    <property type="entry name" value="Beta_elim_lyase"/>
    <property type="match status" value="1"/>
</dbReference>
<dbReference type="PIRSF" id="PIRSF001386">
    <property type="entry name" value="Trpase"/>
    <property type="match status" value="1"/>
</dbReference>
<dbReference type="SUPFAM" id="SSF53383">
    <property type="entry name" value="PLP-dependent transferases"/>
    <property type="match status" value="1"/>
</dbReference>
<feature type="chain" id="PRO_1000017728" description="Tryptophanase">
    <location>
        <begin position="1"/>
        <end position="461"/>
    </location>
</feature>
<feature type="modified residue" description="N6-(pyridoxal phosphate)lysine" evidence="1">
    <location>
        <position position="261"/>
    </location>
</feature>
<protein>
    <recommendedName>
        <fullName evidence="1">Tryptophanase</fullName>
        <ecNumber evidence="1">4.1.99.1</ecNumber>
    </recommendedName>
    <alternativeName>
        <fullName evidence="1">L-tryptophan indole-lyase</fullName>
        <shortName evidence="1">TNase</shortName>
    </alternativeName>
</protein>
<keyword id="KW-0456">Lyase</keyword>
<keyword id="KW-0663">Pyridoxal phosphate</keyword>
<keyword id="KW-0823">Tryptophan catabolism</keyword>
<comment type="catalytic activity">
    <reaction evidence="1">
        <text>L-tryptophan + H2O = indole + pyruvate + NH4(+)</text>
        <dbReference type="Rhea" id="RHEA:19553"/>
        <dbReference type="ChEBI" id="CHEBI:15361"/>
        <dbReference type="ChEBI" id="CHEBI:15377"/>
        <dbReference type="ChEBI" id="CHEBI:16881"/>
        <dbReference type="ChEBI" id="CHEBI:28938"/>
        <dbReference type="ChEBI" id="CHEBI:57912"/>
        <dbReference type="EC" id="4.1.99.1"/>
    </reaction>
</comment>
<comment type="cofactor">
    <cofactor evidence="1">
        <name>pyridoxal 5'-phosphate</name>
        <dbReference type="ChEBI" id="CHEBI:597326"/>
    </cofactor>
</comment>
<comment type="pathway">
    <text evidence="1">Amino-acid degradation; L-tryptophan degradation via pyruvate pathway; indole and pyruvate from L-tryptophan: step 1/1.</text>
</comment>
<comment type="subunit">
    <text evidence="1">Homotetramer.</text>
</comment>
<comment type="similarity">
    <text evidence="1">Belongs to the beta-eliminating lyase family.</text>
</comment>
<proteinExistence type="inferred from homology"/>
<reference key="1">
    <citation type="journal article" date="2008" name="BMC Genomics">
        <title>The genome of Aeromonas salmonicida subsp. salmonicida A449: insights into the evolution of a fish pathogen.</title>
        <authorList>
            <person name="Reith M.E."/>
            <person name="Singh R.K."/>
            <person name="Curtis B."/>
            <person name="Boyd J.M."/>
            <person name="Bouevitch A."/>
            <person name="Kimball J."/>
            <person name="Munholland J."/>
            <person name="Murphy C."/>
            <person name="Sarty D."/>
            <person name="Williams J."/>
            <person name="Nash J.H."/>
            <person name="Johnson S.C."/>
            <person name="Brown L.L."/>
        </authorList>
    </citation>
    <scope>NUCLEOTIDE SEQUENCE [LARGE SCALE GENOMIC DNA]</scope>
    <source>
        <strain>A449</strain>
    </source>
</reference>